<accession>Q9XCV1</accession>
<protein>
    <recommendedName>
        <fullName evidence="1">Methylglyoxal synthase</fullName>
        <shortName evidence="1">MGS</shortName>
        <ecNumber evidence="1">4.2.3.3</ecNumber>
    </recommendedName>
</protein>
<comment type="function">
    <text evidence="1">Catalyzes the formation of methylglyoxal from dihydroxyacetone phosphate.</text>
</comment>
<comment type="catalytic activity">
    <reaction evidence="1">
        <text>dihydroxyacetone phosphate = methylglyoxal + phosphate</text>
        <dbReference type="Rhea" id="RHEA:17937"/>
        <dbReference type="ChEBI" id="CHEBI:17158"/>
        <dbReference type="ChEBI" id="CHEBI:43474"/>
        <dbReference type="ChEBI" id="CHEBI:57642"/>
        <dbReference type="EC" id="4.2.3.3"/>
    </reaction>
</comment>
<comment type="similarity">
    <text evidence="1">Belongs to the methylglyoxal synthase family.</text>
</comment>
<reference key="1">
    <citation type="submission" date="1999-02" db="EMBL/GenBank/DDBJ databases">
        <title>Cloning of methylglyoxal synthase from Thermoanaerobacterium thermosaccharolyticum.</title>
        <authorList>
            <person name="Altaras N.E."/>
            <person name="Cameron D.C."/>
        </authorList>
    </citation>
    <scope>NUCLEOTIDE SEQUENCE [GENOMIC DNA]</scope>
    <source>
        <strain>ATCC 31960 / HG-8</strain>
    </source>
</reference>
<proteinExistence type="inferred from homology"/>
<dbReference type="EC" id="4.2.3.3" evidence="1"/>
<dbReference type="EMBL" id="AF127246">
    <property type="protein sequence ID" value="AAD39142.1"/>
    <property type="molecule type" value="Genomic_DNA"/>
</dbReference>
<dbReference type="SMR" id="Q9XCV1"/>
<dbReference type="GO" id="GO:0005829">
    <property type="term" value="C:cytosol"/>
    <property type="evidence" value="ECO:0007669"/>
    <property type="project" value="TreeGrafter"/>
</dbReference>
<dbReference type="GO" id="GO:0008929">
    <property type="term" value="F:methylglyoxal synthase activity"/>
    <property type="evidence" value="ECO:0007669"/>
    <property type="project" value="UniProtKB-UniRule"/>
</dbReference>
<dbReference type="GO" id="GO:0019242">
    <property type="term" value="P:methylglyoxal biosynthetic process"/>
    <property type="evidence" value="ECO:0007669"/>
    <property type="project" value="UniProtKB-UniRule"/>
</dbReference>
<dbReference type="CDD" id="cd01422">
    <property type="entry name" value="MGS"/>
    <property type="match status" value="1"/>
</dbReference>
<dbReference type="Gene3D" id="3.40.50.1380">
    <property type="entry name" value="Methylglyoxal synthase-like domain"/>
    <property type="match status" value="1"/>
</dbReference>
<dbReference type="HAMAP" id="MF_00549">
    <property type="entry name" value="Methylglyoxal_synth"/>
    <property type="match status" value="1"/>
</dbReference>
<dbReference type="InterPro" id="IPR004363">
    <property type="entry name" value="Methylgl_synth"/>
</dbReference>
<dbReference type="InterPro" id="IPR018148">
    <property type="entry name" value="Methylglyoxal_synth_AS"/>
</dbReference>
<dbReference type="InterPro" id="IPR011607">
    <property type="entry name" value="MGS-like_dom"/>
</dbReference>
<dbReference type="InterPro" id="IPR036914">
    <property type="entry name" value="MGS-like_dom_sf"/>
</dbReference>
<dbReference type="NCBIfam" id="TIGR00160">
    <property type="entry name" value="MGSA"/>
    <property type="match status" value="1"/>
</dbReference>
<dbReference type="NCBIfam" id="NF003559">
    <property type="entry name" value="PRK05234.1"/>
    <property type="match status" value="1"/>
</dbReference>
<dbReference type="PANTHER" id="PTHR30492">
    <property type="entry name" value="METHYLGLYOXAL SYNTHASE"/>
    <property type="match status" value="1"/>
</dbReference>
<dbReference type="PANTHER" id="PTHR30492:SF0">
    <property type="entry name" value="METHYLGLYOXAL SYNTHASE"/>
    <property type="match status" value="1"/>
</dbReference>
<dbReference type="Pfam" id="PF02142">
    <property type="entry name" value="MGS"/>
    <property type="match status" value="1"/>
</dbReference>
<dbReference type="PIRSF" id="PIRSF006614">
    <property type="entry name" value="Methylglyox_syn"/>
    <property type="match status" value="1"/>
</dbReference>
<dbReference type="SMART" id="SM00851">
    <property type="entry name" value="MGS"/>
    <property type="match status" value="1"/>
</dbReference>
<dbReference type="SUPFAM" id="SSF52335">
    <property type="entry name" value="Methylglyoxal synthase-like"/>
    <property type="match status" value="1"/>
</dbReference>
<dbReference type="PROSITE" id="PS01335">
    <property type="entry name" value="METHYLGLYOXAL_SYNTH"/>
    <property type="match status" value="1"/>
</dbReference>
<dbReference type="PROSITE" id="PS51855">
    <property type="entry name" value="MGS"/>
    <property type="match status" value="1"/>
</dbReference>
<sequence>MVNLNIALIAHDMKKSLMIDFAIAYKDILEKCNIYATGATGQLVEEATGIKVNKFLPGPMGGDQQIGAMIAEDKMDLVIFLRDPLTAQPHEPDILALLRVCDVHSIPLATNLATAEVLIKGLDAGLLEWRNAVK</sequence>
<feature type="chain" id="PRO_0000178623" description="Methylglyoxal synthase">
    <location>
        <begin position="1"/>
        <end position="134"/>
    </location>
</feature>
<feature type="domain" description="MGS-like" evidence="1">
    <location>
        <begin position="1"/>
        <end position="134"/>
    </location>
</feature>
<feature type="active site" description="Proton donor/acceptor" evidence="1">
    <location>
        <position position="63"/>
    </location>
</feature>
<feature type="binding site" evidence="1">
    <location>
        <position position="11"/>
    </location>
    <ligand>
        <name>substrate</name>
    </ligand>
</feature>
<feature type="binding site" evidence="1">
    <location>
        <position position="15"/>
    </location>
    <ligand>
        <name>substrate</name>
    </ligand>
</feature>
<feature type="binding site" evidence="1">
    <location>
        <begin position="37"/>
        <end position="40"/>
    </location>
    <ligand>
        <name>substrate</name>
    </ligand>
</feature>
<feature type="binding site" evidence="1">
    <location>
        <position position="90"/>
    </location>
    <ligand>
        <name>substrate</name>
    </ligand>
</feature>
<name>MGSA_THETR</name>
<keyword id="KW-0456">Lyase</keyword>
<gene>
    <name evidence="1" type="primary">mgsA</name>
    <name type="synonym">mgs</name>
</gene>
<evidence type="ECO:0000255" key="1">
    <source>
        <dbReference type="HAMAP-Rule" id="MF_00549"/>
    </source>
</evidence>
<organism>
    <name type="scientific">Thermoanaerobacterium thermosaccharolyticum</name>
    <name type="common">Clostridium thermosaccharolyticum</name>
    <dbReference type="NCBI Taxonomy" id="1517"/>
    <lineage>
        <taxon>Bacteria</taxon>
        <taxon>Bacillati</taxon>
        <taxon>Bacillota</taxon>
        <taxon>Clostridia</taxon>
        <taxon>Thermoanaerobacterales</taxon>
        <taxon>Thermoanaerobacteraceae</taxon>
        <taxon>Thermoanaerobacterium</taxon>
    </lineage>
</organism>